<feature type="chain" id="PRO_1000091636" description="Ribonuclease HII">
    <location>
        <begin position="1"/>
        <end position="239"/>
    </location>
</feature>
<feature type="domain" description="RNase H type-2" evidence="2">
    <location>
        <begin position="30"/>
        <end position="221"/>
    </location>
</feature>
<feature type="region of interest" description="Disordered" evidence="3">
    <location>
        <begin position="219"/>
        <end position="239"/>
    </location>
</feature>
<feature type="compositionally biased region" description="Basic and acidic residues" evidence="3">
    <location>
        <begin position="225"/>
        <end position="239"/>
    </location>
</feature>
<feature type="binding site" evidence="1">
    <location>
        <position position="36"/>
    </location>
    <ligand>
        <name>a divalent metal cation</name>
        <dbReference type="ChEBI" id="CHEBI:60240"/>
    </ligand>
</feature>
<feature type="binding site" evidence="1">
    <location>
        <position position="37"/>
    </location>
    <ligand>
        <name>a divalent metal cation</name>
        <dbReference type="ChEBI" id="CHEBI:60240"/>
    </ligand>
</feature>
<feature type="binding site" evidence="1">
    <location>
        <position position="130"/>
    </location>
    <ligand>
        <name>a divalent metal cation</name>
        <dbReference type="ChEBI" id="CHEBI:60240"/>
    </ligand>
</feature>
<dbReference type="EC" id="3.1.26.4" evidence="1"/>
<dbReference type="EMBL" id="CP000854">
    <property type="protein sequence ID" value="ACC40255.1"/>
    <property type="molecule type" value="Genomic_DNA"/>
</dbReference>
<dbReference type="SMR" id="B2HJL9"/>
<dbReference type="STRING" id="216594.MMAR_1806"/>
<dbReference type="KEGG" id="mmi:MMAR_1806"/>
<dbReference type="eggNOG" id="COG0164">
    <property type="taxonomic scope" value="Bacteria"/>
</dbReference>
<dbReference type="HOGENOM" id="CLU_036532_1_0_11"/>
<dbReference type="OrthoDB" id="9803420at2"/>
<dbReference type="Proteomes" id="UP000001190">
    <property type="component" value="Chromosome"/>
</dbReference>
<dbReference type="GO" id="GO:0005737">
    <property type="term" value="C:cytoplasm"/>
    <property type="evidence" value="ECO:0007669"/>
    <property type="project" value="UniProtKB-SubCell"/>
</dbReference>
<dbReference type="GO" id="GO:0032299">
    <property type="term" value="C:ribonuclease H2 complex"/>
    <property type="evidence" value="ECO:0007669"/>
    <property type="project" value="TreeGrafter"/>
</dbReference>
<dbReference type="GO" id="GO:0030145">
    <property type="term" value="F:manganese ion binding"/>
    <property type="evidence" value="ECO:0007669"/>
    <property type="project" value="UniProtKB-UniRule"/>
</dbReference>
<dbReference type="GO" id="GO:0003723">
    <property type="term" value="F:RNA binding"/>
    <property type="evidence" value="ECO:0007669"/>
    <property type="project" value="InterPro"/>
</dbReference>
<dbReference type="GO" id="GO:0004523">
    <property type="term" value="F:RNA-DNA hybrid ribonuclease activity"/>
    <property type="evidence" value="ECO:0007669"/>
    <property type="project" value="UniProtKB-UniRule"/>
</dbReference>
<dbReference type="GO" id="GO:0043137">
    <property type="term" value="P:DNA replication, removal of RNA primer"/>
    <property type="evidence" value="ECO:0007669"/>
    <property type="project" value="TreeGrafter"/>
</dbReference>
<dbReference type="GO" id="GO:0006298">
    <property type="term" value="P:mismatch repair"/>
    <property type="evidence" value="ECO:0007669"/>
    <property type="project" value="TreeGrafter"/>
</dbReference>
<dbReference type="CDD" id="cd07182">
    <property type="entry name" value="RNase_HII_bacteria_HII_like"/>
    <property type="match status" value="1"/>
</dbReference>
<dbReference type="FunFam" id="3.30.420.10:FF:000113">
    <property type="entry name" value="Ribonuclease HII"/>
    <property type="match status" value="1"/>
</dbReference>
<dbReference type="Gene3D" id="3.30.420.10">
    <property type="entry name" value="Ribonuclease H-like superfamily/Ribonuclease H"/>
    <property type="match status" value="1"/>
</dbReference>
<dbReference type="HAMAP" id="MF_00052_B">
    <property type="entry name" value="RNase_HII_B"/>
    <property type="match status" value="1"/>
</dbReference>
<dbReference type="InterPro" id="IPR022898">
    <property type="entry name" value="RNase_HII"/>
</dbReference>
<dbReference type="InterPro" id="IPR001352">
    <property type="entry name" value="RNase_HII/HIII"/>
</dbReference>
<dbReference type="InterPro" id="IPR024567">
    <property type="entry name" value="RNase_HII/HIII_dom"/>
</dbReference>
<dbReference type="InterPro" id="IPR012337">
    <property type="entry name" value="RNaseH-like_sf"/>
</dbReference>
<dbReference type="InterPro" id="IPR036397">
    <property type="entry name" value="RNaseH_sf"/>
</dbReference>
<dbReference type="NCBIfam" id="NF000595">
    <property type="entry name" value="PRK00015.1-3"/>
    <property type="match status" value="1"/>
</dbReference>
<dbReference type="NCBIfam" id="NF000598">
    <property type="entry name" value="PRK00015.2-2"/>
    <property type="match status" value="1"/>
</dbReference>
<dbReference type="NCBIfam" id="NF000600">
    <property type="entry name" value="PRK00015.2-4"/>
    <property type="match status" value="1"/>
</dbReference>
<dbReference type="PANTHER" id="PTHR10954">
    <property type="entry name" value="RIBONUCLEASE H2 SUBUNIT A"/>
    <property type="match status" value="1"/>
</dbReference>
<dbReference type="PANTHER" id="PTHR10954:SF18">
    <property type="entry name" value="RIBONUCLEASE HII"/>
    <property type="match status" value="1"/>
</dbReference>
<dbReference type="Pfam" id="PF01351">
    <property type="entry name" value="RNase_HII"/>
    <property type="match status" value="1"/>
</dbReference>
<dbReference type="SUPFAM" id="SSF53098">
    <property type="entry name" value="Ribonuclease H-like"/>
    <property type="match status" value="1"/>
</dbReference>
<dbReference type="PROSITE" id="PS51975">
    <property type="entry name" value="RNASE_H_2"/>
    <property type="match status" value="1"/>
</dbReference>
<protein>
    <recommendedName>
        <fullName evidence="1">Ribonuclease HII</fullName>
        <shortName evidence="1">RNase HII</shortName>
        <ecNumber evidence="1">3.1.26.4</ecNumber>
    </recommendedName>
</protein>
<reference key="1">
    <citation type="journal article" date="2008" name="Genome Res.">
        <title>Insights from the complete genome sequence of Mycobacterium marinum on the evolution of Mycobacterium tuberculosis.</title>
        <authorList>
            <person name="Stinear T.P."/>
            <person name="Seemann T."/>
            <person name="Harrison P.F."/>
            <person name="Jenkin G.A."/>
            <person name="Davies J.K."/>
            <person name="Johnson P.D."/>
            <person name="Abdellah Z."/>
            <person name="Arrowsmith C."/>
            <person name="Chillingworth T."/>
            <person name="Churcher C."/>
            <person name="Clarke K."/>
            <person name="Cronin A."/>
            <person name="Davis P."/>
            <person name="Goodhead I."/>
            <person name="Holroyd N."/>
            <person name="Jagels K."/>
            <person name="Lord A."/>
            <person name="Moule S."/>
            <person name="Mungall K."/>
            <person name="Norbertczak H."/>
            <person name="Quail M.A."/>
            <person name="Rabbinowitsch E."/>
            <person name="Walker D."/>
            <person name="White B."/>
            <person name="Whitehead S."/>
            <person name="Small P.L."/>
            <person name="Brosch R."/>
            <person name="Ramakrishnan L."/>
            <person name="Fischbach M.A."/>
            <person name="Parkhill J."/>
            <person name="Cole S.T."/>
        </authorList>
    </citation>
    <scope>NUCLEOTIDE SEQUENCE [LARGE SCALE GENOMIC DNA]</scope>
    <source>
        <strain>ATCC BAA-535 / M</strain>
    </source>
</reference>
<sequence>MATTWPPRTVIRKSSGLRTLESALQRSGLGPVAGVDEVGRGACAGPLVVAACALGPNRYESLAALDDSKKLTEKTREKLFPLICRYALAYHVVFIPSVEVDRRGVHVANIEGMRRAVAGLSVRPGYVLSDGFRVPGLSVPSLPVIGGDAAAACIAAASVLAKVSRDRLMVAMDTQYPGYGFAEHKGYSTRAHTLALTQLGPCPEHRRSFINVRRVATRSNGAAAAEREADPPQERDGTG</sequence>
<comment type="function">
    <text evidence="1">Endonuclease that specifically degrades the RNA of RNA-DNA hybrids.</text>
</comment>
<comment type="catalytic activity">
    <reaction evidence="1">
        <text>Endonucleolytic cleavage to 5'-phosphomonoester.</text>
        <dbReference type="EC" id="3.1.26.4"/>
    </reaction>
</comment>
<comment type="cofactor">
    <cofactor evidence="1">
        <name>Mn(2+)</name>
        <dbReference type="ChEBI" id="CHEBI:29035"/>
    </cofactor>
    <cofactor evidence="1">
        <name>Mg(2+)</name>
        <dbReference type="ChEBI" id="CHEBI:18420"/>
    </cofactor>
    <text evidence="1">Manganese or magnesium. Binds 1 divalent metal ion per monomer in the absence of substrate. May bind a second metal ion after substrate binding.</text>
</comment>
<comment type="subcellular location">
    <subcellularLocation>
        <location evidence="1">Cytoplasm</location>
    </subcellularLocation>
</comment>
<comment type="similarity">
    <text evidence="1">Belongs to the RNase HII family.</text>
</comment>
<keyword id="KW-0963">Cytoplasm</keyword>
<keyword id="KW-0255">Endonuclease</keyword>
<keyword id="KW-0378">Hydrolase</keyword>
<keyword id="KW-0464">Manganese</keyword>
<keyword id="KW-0479">Metal-binding</keyword>
<keyword id="KW-0540">Nuclease</keyword>
<keyword id="KW-1185">Reference proteome</keyword>
<gene>
    <name evidence="1" type="primary">rnhB</name>
    <name type="ordered locus">MMAR_1806</name>
</gene>
<accession>B2HJL9</accession>
<proteinExistence type="inferred from homology"/>
<evidence type="ECO:0000255" key="1">
    <source>
        <dbReference type="HAMAP-Rule" id="MF_00052"/>
    </source>
</evidence>
<evidence type="ECO:0000255" key="2">
    <source>
        <dbReference type="PROSITE-ProRule" id="PRU01319"/>
    </source>
</evidence>
<evidence type="ECO:0000256" key="3">
    <source>
        <dbReference type="SAM" id="MobiDB-lite"/>
    </source>
</evidence>
<organism>
    <name type="scientific">Mycobacterium marinum (strain ATCC BAA-535 / M)</name>
    <dbReference type="NCBI Taxonomy" id="216594"/>
    <lineage>
        <taxon>Bacteria</taxon>
        <taxon>Bacillati</taxon>
        <taxon>Actinomycetota</taxon>
        <taxon>Actinomycetes</taxon>
        <taxon>Mycobacteriales</taxon>
        <taxon>Mycobacteriaceae</taxon>
        <taxon>Mycobacterium</taxon>
        <taxon>Mycobacterium ulcerans group</taxon>
    </lineage>
</organism>
<name>RNH2_MYCMM</name>